<reference key="1">
    <citation type="submission" date="1995-05" db="EMBL/GenBank/DDBJ databases">
        <title>Comparison and high conservation of nucleotide sequences of spa-mxi regions between S.sonnei and S.flexneri -- identification of a new gene coding plausible membrane protein.</title>
        <authorList>
            <person name="Arakawa E."/>
            <person name="Kato J."/>
            <person name="Ito K."/>
            <person name="Watanabe H."/>
        </authorList>
    </citation>
    <scope>NUCLEOTIDE SEQUENCE [GENOMIC DNA]</scope>
    <source>
        <strain>HW383</strain>
    </source>
</reference>
<keyword id="KW-0997">Cell inner membrane</keyword>
<keyword id="KW-1003">Cell membrane</keyword>
<keyword id="KW-0472">Membrane</keyword>
<keyword id="KW-0614">Plasmid</keyword>
<keyword id="KW-0653">Protein transport</keyword>
<keyword id="KW-0812">Transmembrane</keyword>
<keyword id="KW-1133">Transmembrane helix</keyword>
<keyword id="KW-0813">Transport</keyword>
<keyword id="KW-0843">Virulence</keyword>
<gene>
    <name type="primary">mxiA</name>
    <name type="synonym">virH</name>
</gene>
<feature type="chain" id="PRO_0000190033" description="Protein MxiA">
    <location>
        <begin position="1"/>
        <end position="686"/>
    </location>
</feature>
<feature type="transmembrane region" description="Helical" evidence="2">
    <location>
        <begin position="28"/>
        <end position="52"/>
    </location>
</feature>
<feature type="transmembrane region" description="Helical" evidence="2">
    <location>
        <begin position="105"/>
        <end position="129"/>
    </location>
</feature>
<feature type="transmembrane region" description="Helical" evidence="2">
    <location>
        <begin position="197"/>
        <end position="216"/>
    </location>
</feature>
<feature type="transmembrane region" description="Helical" evidence="2">
    <location>
        <begin position="232"/>
        <end position="256"/>
    </location>
</feature>
<feature type="transmembrane region" description="Helical" evidence="2">
    <location>
        <begin position="274"/>
        <end position="292"/>
    </location>
</feature>
<feature type="transmembrane region" description="Helical" evidence="2">
    <location>
        <begin position="299"/>
        <end position="315"/>
    </location>
</feature>
<protein>
    <recommendedName>
        <fullName>Protein MxiA</fullName>
    </recommendedName>
    <alternativeName>
        <fullName>Protein VirH</fullName>
    </alternativeName>
</protein>
<accession>P0A1I6</accession>
<accession>P35533</accession>
<accession>Q55295</accession>
<organism>
    <name type="scientific">Shigella sonnei</name>
    <dbReference type="NCBI Taxonomy" id="624"/>
    <lineage>
        <taxon>Bacteria</taxon>
        <taxon>Pseudomonadati</taxon>
        <taxon>Pseudomonadota</taxon>
        <taxon>Gammaproteobacteria</taxon>
        <taxon>Enterobacterales</taxon>
        <taxon>Enterobacteriaceae</taxon>
        <taxon>Shigella</taxon>
    </lineage>
</organism>
<proteinExistence type="inferred from homology"/>
<name>MXIA_SHISO</name>
<evidence type="ECO:0000250" key="1"/>
<evidence type="ECO:0000255" key="2"/>
<evidence type="ECO:0000305" key="3"/>
<dbReference type="EMBL" id="D50601">
    <property type="protein sequence ID" value="BAA09156.1"/>
    <property type="status" value="ALT_INIT"/>
    <property type="molecule type" value="Genomic_DNA"/>
</dbReference>
<dbReference type="RefSeq" id="WP_000616104.1">
    <property type="nucleotide sequence ID" value="NZ_UIQD01000016.1"/>
</dbReference>
<dbReference type="SMR" id="P0A1I6"/>
<dbReference type="STRING" id="216599.GCA_000283715_05238"/>
<dbReference type="GO" id="GO:0005886">
    <property type="term" value="C:plasma membrane"/>
    <property type="evidence" value="ECO:0007669"/>
    <property type="project" value="UniProtKB-SubCell"/>
</dbReference>
<dbReference type="GO" id="GO:0009306">
    <property type="term" value="P:protein secretion"/>
    <property type="evidence" value="ECO:0007669"/>
    <property type="project" value="InterPro"/>
</dbReference>
<dbReference type="Gene3D" id="3.40.30.60">
    <property type="entry name" value="FHIPEP family, domain 1"/>
    <property type="match status" value="1"/>
</dbReference>
<dbReference type="Gene3D" id="3.40.5.40">
    <property type="entry name" value="FHIPEP family, domain 2"/>
    <property type="match status" value="1"/>
</dbReference>
<dbReference type="Gene3D" id="1.10.8.540">
    <property type="entry name" value="FHIPEP family, domain 3"/>
    <property type="match status" value="1"/>
</dbReference>
<dbReference type="Gene3D" id="3.40.50.12790">
    <property type="entry name" value="FHIPEP family, domain 4"/>
    <property type="match status" value="1"/>
</dbReference>
<dbReference type="InterPro" id="IPR042194">
    <property type="entry name" value="FHIPEP_1"/>
</dbReference>
<dbReference type="InterPro" id="IPR042193">
    <property type="entry name" value="FHIPEP_3"/>
</dbReference>
<dbReference type="InterPro" id="IPR042196">
    <property type="entry name" value="FHIPEP_4"/>
</dbReference>
<dbReference type="InterPro" id="IPR025505">
    <property type="entry name" value="FHIPEP_CS"/>
</dbReference>
<dbReference type="InterPro" id="IPR001712">
    <property type="entry name" value="T3SS_FHIPEP"/>
</dbReference>
<dbReference type="InterPro" id="IPR006302">
    <property type="entry name" value="T3SS_HrcV"/>
</dbReference>
<dbReference type="NCBIfam" id="TIGR01399">
    <property type="entry name" value="hrcV"/>
    <property type="match status" value="1"/>
</dbReference>
<dbReference type="NCBIfam" id="NF011865">
    <property type="entry name" value="PRK15337.1"/>
    <property type="match status" value="1"/>
</dbReference>
<dbReference type="PANTHER" id="PTHR30161">
    <property type="entry name" value="FLAGELLAR EXPORT PROTEIN, MEMBRANE FLHA SUBUNIT-RELATED"/>
    <property type="match status" value="1"/>
</dbReference>
<dbReference type="PANTHER" id="PTHR30161:SF2">
    <property type="entry name" value="INVASION PROTEIN INVA"/>
    <property type="match status" value="1"/>
</dbReference>
<dbReference type="Pfam" id="PF00771">
    <property type="entry name" value="FHIPEP"/>
    <property type="match status" value="1"/>
</dbReference>
<dbReference type="PIRSF" id="PIRSF005419">
    <property type="entry name" value="FlhA"/>
    <property type="match status" value="1"/>
</dbReference>
<dbReference type="PRINTS" id="PR00949">
    <property type="entry name" value="TYPE3IMAPROT"/>
</dbReference>
<dbReference type="PROSITE" id="PS00994">
    <property type="entry name" value="FHIPEP"/>
    <property type="match status" value="1"/>
</dbReference>
<comment type="function">
    <text evidence="1">Necessary for the secretion of IPA invasins.</text>
</comment>
<comment type="subcellular location">
    <subcellularLocation>
        <location evidence="1">Cell inner membrane</location>
        <topology evidence="1">Multi-pass membrane protein</topology>
    </subcellularLocation>
</comment>
<comment type="similarity">
    <text evidence="3">Belongs to the FHIPEP (flagella/HR/invasion proteins export pore) family.</text>
</comment>
<comment type="sequence caution" evidence="3">
    <conflict type="erroneous initiation">
        <sequence resource="EMBL-CDS" id="BAA09156"/>
    </conflict>
</comment>
<sequence>MIQSFLKQVSTKPELIILVLMVMIIAMLIIPLPTYLVDFLIGLNIVLAILVFMGSFYIERILSFSTFPSVLLITTLFRLALSISTSRLILVDADAGKIITTFGQFVIGDSLAVGFVIFSIVTVVQFIVITKGSERVAEVAARFSLDGMPGKQMSIDADLKAGIIDAAGAKERRSILERESQLYGSFDGAMKFIKGDAIAGIIIIFVNLIGGISVGMSQHGMSLSGALSTYTILTIGDGLVSQIPALLISISAGFIVTRVNGDSDNMGRNIMSQIFGNPFVLIVTSALALAIGMLPGFPFFVFFLIAVTLTALFYYKKVVEKEKSLSESDSSGYTGTFDIDNSHDSSLAMIENLDAISSETVPLILLFAENKINANDMEGLIERIRSQFFIDYGVRLPTILYRTSNELKVDDIVLLINEVRADSFNIYFDKVCITDENGDIDALGIPVVSTSYNERVISWVDVSYTENLTNIDAKIKSAQDEFYHQLSQALLNNINEIFGIQETKNMLDQFENRYPDLLKEVFRHVTIQRISEVLQRLLGENISVRNLKLIMESLALWAPREKDVITLVEHVRASLSRYICSKIAVSGEIKVVMLSGYIEDAIRKGIRQTSGGSFLNMDIEVSDEVMETLAHALRELRNAKKNFVLLVSVDIRRFVKRLIDNRFKSILVISYAEIDEAYTINVLKTI</sequence>
<geneLocation type="plasmid">
    <name>pINV</name>
</geneLocation>